<name>TSAC_SHEAM</name>
<reference key="1">
    <citation type="submission" date="2006-12" db="EMBL/GenBank/DDBJ databases">
        <title>Complete sequence of Shewanella amazonensis SB2B.</title>
        <authorList>
            <consortium name="US DOE Joint Genome Institute"/>
            <person name="Copeland A."/>
            <person name="Lucas S."/>
            <person name="Lapidus A."/>
            <person name="Barry K."/>
            <person name="Detter J.C."/>
            <person name="Glavina del Rio T."/>
            <person name="Hammon N."/>
            <person name="Israni S."/>
            <person name="Dalin E."/>
            <person name="Tice H."/>
            <person name="Pitluck S."/>
            <person name="Munk A.C."/>
            <person name="Brettin T."/>
            <person name="Bruce D."/>
            <person name="Han C."/>
            <person name="Tapia R."/>
            <person name="Gilna P."/>
            <person name="Schmutz J."/>
            <person name="Larimer F."/>
            <person name="Land M."/>
            <person name="Hauser L."/>
            <person name="Kyrpides N."/>
            <person name="Mikhailova N."/>
            <person name="Fredrickson J."/>
            <person name="Richardson P."/>
        </authorList>
    </citation>
    <scope>NUCLEOTIDE SEQUENCE [LARGE SCALE GENOMIC DNA]</scope>
    <source>
        <strain>ATCC BAA-1098 / SB2B</strain>
    </source>
</reference>
<sequence length="187" mass="20044">MLQVTPSQISGIIESGGVVAYPTEAVYGLGCDPDNDTAIQKLLAVKQRPWEKGLILIASSFDQLKPYIDLSRVTEAQLQAAFDKWPGPFTFVIPAKADVSPMLRGCFDTIAVRVSAHQDVRAMCYACQKPLVSTSANLAGEQPALTLAEVQTQLGDKIDAVVLGALGQSCQPSTIIDIQTGHIFRQG</sequence>
<comment type="function">
    <text evidence="1">Required for the formation of a threonylcarbamoyl group on adenosine at position 37 (t(6)A37) in tRNAs that read codons beginning with adenine. Catalyzes the conversion of L-threonine, HCO(3)(-)/CO(2) and ATP to give threonylcarbamoyl-AMP (TC-AMP) as the acyladenylate intermediate, with the release of diphosphate.</text>
</comment>
<comment type="catalytic activity">
    <reaction evidence="1">
        <text>L-threonine + hydrogencarbonate + ATP = L-threonylcarbamoyladenylate + diphosphate + H2O</text>
        <dbReference type="Rhea" id="RHEA:36407"/>
        <dbReference type="ChEBI" id="CHEBI:15377"/>
        <dbReference type="ChEBI" id="CHEBI:17544"/>
        <dbReference type="ChEBI" id="CHEBI:30616"/>
        <dbReference type="ChEBI" id="CHEBI:33019"/>
        <dbReference type="ChEBI" id="CHEBI:57926"/>
        <dbReference type="ChEBI" id="CHEBI:73682"/>
        <dbReference type="EC" id="2.7.7.87"/>
    </reaction>
</comment>
<comment type="subcellular location">
    <subcellularLocation>
        <location evidence="1">Cytoplasm</location>
    </subcellularLocation>
</comment>
<comment type="similarity">
    <text evidence="1">Belongs to the SUA5 family. TsaC subfamily.</text>
</comment>
<comment type="sequence caution" evidence="2">
    <conflict type="erroneous initiation">
        <sequence resource="EMBL-CDS" id="ABL98261"/>
    </conflict>
</comment>
<organism>
    <name type="scientific">Shewanella amazonensis (strain ATCC BAA-1098 / SB2B)</name>
    <dbReference type="NCBI Taxonomy" id="326297"/>
    <lineage>
        <taxon>Bacteria</taxon>
        <taxon>Pseudomonadati</taxon>
        <taxon>Pseudomonadota</taxon>
        <taxon>Gammaproteobacteria</taxon>
        <taxon>Alteromonadales</taxon>
        <taxon>Shewanellaceae</taxon>
        <taxon>Shewanella</taxon>
    </lineage>
</organism>
<evidence type="ECO:0000255" key="1">
    <source>
        <dbReference type="HAMAP-Rule" id="MF_01852"/>
    </source>
</evidence>
<evidence type="ECO:0000305" key="2"/>
<keyword id="KW-0067">ATP-binding</keyword>
<keyword id="KW-0963">Cytoplasm</keyword>
<keyword id="KW-0547">Nucleotide-binding</keyword>
<keyword id="KW-0548">Nucleotidyltransferase</keyword>
<keyword id="KW-1185">Reference proteome</keyword>
<keyword id="KW-0808">Transferase</keyword>
<keyword id="KW-0819">tRNA processing</keyword>
<gene>
    <name evidence="1" type="primary">tsaC</name>
    <name type="synonym">rimN</name>
    <name type="ordered locus">Sama_0049</name>
</gene>
<dbReference type="EC" id="2.7.7.87" evidence="1"/>
<dbReference type="EMBL" id="CP000507">
    <property type="protein sequence ID" value="ABL98261.1"/>
    <property type="status" value="ALT_INIT"/>
    <property type="molecule type" value="Genomic_DNA"/>
</dbReference>
<dbReference type="RefSeq" id="WP_041409559.1">
    <property type="nucleotide sequence ID" value="NC_008700.1"/>
</dbReference>
<dbReference type="SMR" id="A1S1K5"/>
<dbReference type="STRING" id="326297.Sama_0049"/>
<dbReference type="KEGG" id="saz:Sama_0049"/>
<dbReference type="eggNOG" id="COG0009">
    <property type="taxonomic scope" value="Bacteria"/>
</dbReference>
<dbReference type="HOGENOM" id="CLU_031397_6_0_6"/>
<dbReference type="OrthoDB" id="9814580at2"/>
<dbReference type="Proteomes" id="UP000009175">
    <property type="component" value="Chromosome"/>
</dbReference>
<dbReference type="GO" id="GO:0005737">
    <property type="term" value="C:cytoplasm"/>
    <property type="evidence" value="ECO:0007669"/>
    <property type="project" value="UniProtKB-SubCell"/>
</dbReference>
<dbReference type="GO" id="GO:0005524">
    <property type="term" value="F:ATP binding"/>
    <property type="evidence" value="ECO:0007669"/>
    <property type="project" value="UniProtKB-UniRule"/>
</dbReference>
<dbReference type="GO" id="GO:0003725">
    <property type="term" value="F:double-stranded RNA binding"/>
    <property type="evidence" value="ECO:0007669"/>
    <property type="project" value="InterPro"/>
</dbReference>
<dbReference type="GO" id="GO:0061710">
    <property type="term" value="F:L-threonylcarbamoyladenylate synthase"/>
    <property type="evidence" value="ECO:0007669"/>
    <property type="project" value="UniProtKB-EC"/>
</dbReference>
<dbReference type="GO" id="GO:0000049">
    <property type="term" value="F:tRNA binding"/>
    <property type="evidence" value="ECO:0007669"/>
    <property type="project" value="TreeGrafter"/>
</dbReference>
<dbReference type="GO" id="GO:0006450">
    <property type="term" value="P:regulation of translational fidelity"/>
    <property type="evidence" value="ECO:0007669"/>
    <property type="project" value="TreeGrafter"/>
</dbReference>
<dbReference type="GO" id="GO:0002949">
    <property type="term" value="P:tRNA threonylcarbamoyladenosine modification"/>
    <property type="evidence" value="ECO:0007669"/>
    <property type="project" value="UniProtKB-UniRule"/>
</dbReference>
<dbReference type="FunFam" id="3.90.870.10:FF:000004">
    <property type="entry name" value="Threonylcarbamoyl-AMP synthase"/>
    <property type="match status" value="1"/>
</dbReference>
<dbReference type="Gene3D" id="3.90.870.10">
    <property type="entry name" value="DHBP synthase"/>
    <property type="match status" value="1"/>
</dbReference>
<dbReference type="HAMAP" id="MF_01852">
    <property type="entry name" value="TsaC"/>
    <property type="match status" value="1"/>
</dbReference>
<dbReference type="InterPro" id="IPR017945">
    <property type="entry name" value="DHBP_synth_RibB-like_a/b_dom"/>
</dbReference>
<dbReference type="InterPro" id="IPR006070">
    <property type="entry name" value="Sua5-like_dom"/>
</dbReference>
<dbReference type="InterPro" id="IPR023535">
    <property type="entry name" value="TC-AMP_synthase"/>
</dbReference>
<dbReference type="InterPro" id="IPR050156">
    <property type="entry name" value="TC-AMP_synthase_SUA5"/>
</dbReference>
<dbReference type="NCBIfam" id="TIGR00057">
    <property type="entry name" value="L-threonylcarbamoyladenylate synthase"/>
    <property type="match status" value="1"/>
</dbReference>
<dbReference type="PANTHER" id="PTHR17490">
    <property type="entry name" value="SUA5"/>
    <property type="match status" value="1"/>
</dbReference>
<dbReference type="PANTHER" id="PTHR17490:SF18">
    <property type="entry name" value="THREONYLCARBAMOYL-AMP SYNTHASE"/>
    <property type="match status" value="1"/>
</dbReference>
<dbReference type="Pfam" id="PF01300">
    <property type="entry name" value="Sua5_yciO_yrdC"/>
    <property type="match status" value="1"/>
</dbReference>
<dbReference type="SUPFAM" id="SSF55821">
    <property type="entry name" value="YrdC/RibB"/>
    <property type="match status" value="1"/>
</dbReference>
<dbReference type="PROSITE" id="PS51163">
    <property type="entry name" value="YRDC"/>
    <property type="match status" value="1"/>
</dbReference>
<protein>
    <recommendedName>
        <fullName evidence="1">Threonylcarbamoyl-AMP synthase</fullName>
        <shortName evidence="1">TC-AMP synthase</shortName>
        <ecNumber evidence="1">2.7.7.87</ecNumber>
    </recommendedName>
    <alternativeName>
        <fullName evidence="1">L-threonylcarbamoyladenylate synthase</fullName>
    </alternativeName>
    <alternativeName>
        <fullName evidence="1">t(6)A37 threonylcarbamoyladenosine biosynthesis protein TsaC</fullName>
    </alternativeName>
    <alternativeName>
        <fullName evidence="1">tRNA threonylcarbamoyladenosine biosynthesis protein TsaC</fullName>
    </alternativeName>
</protein>
<feature type="chain" id="PRO_0000352974" description="Threonylcarbamoyl-AMP synthase">
    <location>
        <begin position="1"/>
        <end position="187"/>
    </location>
</feature>
<feature type="domain" description="YrdC-like" evidence="1">
    <location>
        <begin position="3"/>
        <end position="187"/>
    </location>
</feature>
<proteinExistence type="inferred from homology"/>
<accession>A1S1K5</accession>